<comment type="catalytic activity">
    <reaction evidence="1">
        <text>5-dehydro-4-deoxy-D-glucarate + H(+) = 2,5-dioxopentanoate + CO2 + H2O</text>
        <dbReference type="Rhea" id="RHEA:24608"/>
        <dbReference type="ChEBI" id="CHEBI:15377"/>
        <dbReference type="ChEBI" id="CHEBI:15378"/>
        <dbReference type="ChEBI" id="CHEBI:16526"/>
        <dbReference type="ChEBI" id="CHEBI:42819"/>
        <dbReference type="ChEBI" id="CHEBI:58136"/>
        <dbReference type="EC" id="4.2.1.41"/>
    </reaction>
</comment>
<comment type="pathway">
    <text evidence="1">Carbohydrate acid metabolism; D-glucarate degradation; 2,5-dioxopentanoate from D-glucarate: step 2/2.</text>
</comment>
<comment type="similarity">
    <text evidence="1">Belongs to the DapA family.</text>
</comment>
<evidence type="ECO:0000255" key="1">
    <source>
        <dbReference type="HAMAP-Rule" id="MF_00694"/>
    </source>
</evidence>
<gene>
    <name type="ordered locus">A1S_1101</name>
</gene>
<feature type="chain" id="PRO_1000132267" description="Probable 5-dehydro-4-deoxyglucarate dehydratase">
    <location>
        <begin position="1"/>
        <end position="303"/>
    </location>
</feature>
<reference key="1">
    <citation type="journal article" date="2007" name="Genes Dev.">
        <title>New insights into Acinetobacter baumannii pathogenesis revealed by high-density pyrosequencing and transposon mutagenesis.</title>
        <authorList>
            <person name="Smith M.G."/>
            <person name="Gianoulis T.A."/>
            <person name="Pukatzki S."/>
            <person name="Mekalanos J.J."/>
            <person name="Ornston L.N."/>
            <person name="Gerstein M."/>
            <person name="Snyder M."/>
        </authorList>
    </citation>
    <scope>NUCLEOTIDE SEQUENCE [LARGE SCALE GENOMIC DNA]</scope>
    <source>
        <strain>ATCC 17978 / DSM 105126 / CIP 53.77 / LMG 1025 / NCDC KC755 / 5377</strain>
    </source>
</reference>
<sequence>MDALELKNIISDGLLSFPVTDFDQNGDFNKSSYAKRLEWLAPYGASALFAAGGTGEFFSLTGNEYSEVIKTAVDTCKGSVPIIAGAGGPTRQAIEQAKEAERLGAHGILLMPHYLTEASQEGLIEHVKQVCNSVDFGVIFYNRSVSRLNLDSIQKLTEMCPNLIGFKDSSGQIDMMTAVTQTIGDRLSYLGGLPTAEVFAAPYKALGCPVYSSAVFNFIPKTAMEFYNALRSDDFETTNRLIKDFFLPLIKIRDRKSGYAVSMIKAGAKIVGHDAGPVRPPLSDLTQADYEDLAALIATLGPQ</sequence>
<dbReference type="EC" id="4.2.1.41" evidence="1"/>
<dbReference type="EMBL" id="CP000521">
    <property type="protein sequence ID" value="ABO11531.2"/>
    <property type="molecule type" value="Genomic_DNA"/>
</dbReference>
<dbReference type="SMR" id="A3M3N7"/>
<dbReference type="KEGG" id="acb:A1S_1101"/>
<dbReference type="HOGENOM" id="CLU_049343_5_2_6"/>
<dbReference type="UniPathway" id="UPA00564">
    <property type="reaction ID" value="UER00628"/>
</dbReference>
<dbReference type="GO" id="GO:0008840">
    <property type="term" value="F:4-hydroxy-tetrahydrodipicolinate synthase activity"/>
    <property type="evidence" value="ECO:0007669"/>
    <property type="project" value="TreeGrafter"/>
</dbReference>
<dbReference type="GO" id="GO:0047448">
    <property type="term" value="F:5-dehydro-4-deoxyglucarate dehydratase activity"/>
    <property type="evidence" value="ECO:0007669"/>
    <property type="project" value="UniProtKB-UniRule"/>
</dbReference>
<dbReference type="GO" id="GO:0042838">
    <property type="term" value="P:D-glucarate catabolic process"/>
    <property type="evidence" value="ECO:0007669"/>
    <property type="project" value="UniProtKB-UniRule"/>
</dbReference>
<dbReference type="CDD" id="cd00951">
    <property type="entry name" value="KDGDH"/>
    <property type="match status" value="1"/>
</dbReference>
<dbReference type="Gene3D" id="3.20.20.70">
    <property type="entry name" value="Aldolase class I"/>
    <property type="match status" value="1"/>
</dbReference>
<dbReference type="HAMAP" id="MF_00694">
    <property type="entry name" value="KDGDH"/>
    <property type="match status" value="1"/>
</dbReference>
<dbReference type="InterPro" id="IPR013785">
    <property type="entry name" value="Aldolase_TIM"/>
</dbReference>
<dbReference type="InterPro" id="IPR002220">
    <property type="entry name" value="DapA-like"/>
</dbReference>
<dbReference type="InterPro" id="IPR017655">
    <property type="entry name" value="Dehydro-deoxyglucarate_dehyd"/>
</dbReference>
<dbReference type="NCBIfam" id="TIGR03249">
    <property type="entry name" value="KdgD"/>
    <property type="match status" value="1"/>
</dbReference>
<dbReference type="NCBIfam" id="NF002958">
    <property type="entry name" value="PRK03620.1"/>
    <property type="match status" value="1"/>
</dbReference>
<dbReference type="PANTHER" id="PTHR12128:SF19">
    <property type="entry name" value="5-DEHYDRO-4-DEOXYGLUCARATE DEHYDRATASE 2-RELATED"/>
    <property type="match status" value="1"/>
</dbReference>
<dbReference type="PANTHER" id="PTHR12128">
    <property type="entry name" value="DIHYDRODIPICOLINATE SYNTHASE"/>
    <property type="match status" value="1"/>
</dbReference>
<dbReference type="Pfam" id="PF00701">
    <property type="entry name" value="DHDPS"/>
    <property type="match status" value="1"/>
</dbReference>
<dbReference type="PIRSF" id="PIRSF001365">
    <property type="entry name" value="DHDPS"/>
    <property type="match status" value="1"/>
</dbReference>
<dbReference type="PRINTS" id="PR00146">
    <property type="entry name" value="DHPICSNTHASE"/>
</dbReference>
<dbReference type="SMART" id="SM01130">
    <property type="entry name" value="DHDPS"/>
    <property type="match status" value="1"/>
</dbReference>
<dbReference type="SUPFAM" id="SSF51569">
    <property type="entry name" value="Aldolase"/>
    <property type="match status" value="1"/>
</dbReference>
<name>KDGD_ACIBT</name>
<proteinExistence type="inferred from homology"/>
<protein>
    <recommendedName>
        <fullName evidence="1">Probable 5-dehydro-4-deoxyglucarate dehydratase</fullName>
        <ecNumber evidence="1">4.2.1.41</ecNumber>
    </recommendedName>
    <alternativeName>
        <fullName evidence="1">5-keto-4-deoxy-glucarate dehydratase</fullName>
        <shortName evidence="1">KDGDH</shortName>
    </alternativeName>
</protein>
<accession>A3M3N7</accession>
<keyword id="KW-0456">Lyase</keyword>
<organism>
    <name type="scientific">Acinetobacter baumannii (strain ATCC 17978 / DSM 105126 / CIP 53.77 / LMG 1025 / NCDC KC755 / 5377)</name>
    <dbReference type="NCBI Taxonomy" id="400667"/>
    <lineage>
        <taxon>Bacteria</taxon>
        <taxon>Pseudomonadati</taxon>
        <taxon>Pseudomonadota</taxon>
        <taxon>Gammaproteobacteria</taxon>
        <taxon>Moraxellales</taxon>
        <taxon>Moraxellaceae</taxon>
        <taxon>Acinetobacter</taxon>
        <taxon>Acinetobacter calcoaceticus/baumannii complex</taxon>
    </lineage>
</organism>